<reference key="1">
    <citation type="journal article" date="2006" name="Nat. Biotechnol.">
        <title>Complete genome sequence of the entomopathogenic and metabolically versatile soil bacterium Pseudomonas entomophila.</title>
        <authorList>
            <person name="Vodovar N."/>
            <person name="Vallenet D."/>
            <person name="Cruveiller S."/>
            <person name="Rouy Z."/>
            <person name="Barbe V."/>
            <person name="Acosta C."/>
            <person name="Cattolico L."/>
            <person name="Jubin C."/>
            <person name="Lajus A."/>
            <person name="Segurens B."/>
            <person name="Vacherie B."/>
            <person name="Wincker P."/>
            <person name="Weissenbach J."/>
            <person name="Lemaitre B."/>
            <person name="Medigue C."/>
            <person name="Boccard F."/>
        </authorList>
    </citation>
    <scope>NUCLEOTIDE SEQUENCE [LARGE SCALE GENOMIC DNA]</scope>
    <source>
        <strain>L48</strain>
    </source>
</reference>
<comment type="function">
    <text evidence="1">Catalyzes the attachment of serine to tRNA(Ser). Is also able to aminoacylate tRNA(Sec) with serine, to form the misacylated tRNA L-seryl-tRNA(Sec), which will be further converted into selenocysteinyl-tRNA(Sec).</text>
</comment>
<comment type="catalytic activity">
    <reaction evidence="1">
        <text>tRNA(Ser) + L-serine + ATP = L-seryl-tRNA(Ser) + AMP + diphosphate + H(+)</text>
        <dbReference type="Rhea" id="RHEA:12292"/>
        <dbReference type="Rhea" id="RHEA-COMP:9669"/>
        <dbReference type="Rhea" id="RHEA-COMP:9703"/>
        <dbReference type="ChEBI" id="CHEBI:15378"/>
        <dbReference type="ChEBI" id="CHEBI:30616"/>
        <dbReference type="ChEBI" id="CHEBI:33019"/>
        <dbReference type="ChEBI" id="CHEBI:33384"/>
        <dbReference type="ChEBI" id="CHEBI:78442"/>
        <dbReference type="ChEBI" id="CHEBI:78533"/>
        <dbReference type="ChEBI" id="CHEBI:456215"/>
        <dbReference type="EC" id="6.1.1.11"/>
    </reaction>
</comment>
<comment type="catalytic activity">
    <reaction evidence="1">
        <text>tRNA(Sec) + L-serine + ATP = L-seryl-tRNA(Sec) + AMP + diphosphate + H(+)</text>
        <dbReference type="Rhea" id="RHEA:42580"/>
        <dbReference type="Rhea" id="RHEA-COMP:9742"/>
        <dbReference type="Rhea" id="RHEA-COMP:10128"/>
        <dbReference type="ChEBI" id="CHEBI:15378"/>
        <dbReference type="ChEBI" id="CHEBI:30616"/>
        <dbReference type="ChEBI" id="CHEBI:33019"/>
        <dbReference type="ChEBI" id="CHEBI:33384"/>
        <dbReference type="ChEBI" id="CHEBI:78442"/>
        <dbReference type="ChEBI" id="CHEBI:78533"/>
        <dbReference type="ChEBI" id="CHEBI:456215"/>
        <dbReference type="EC" id="6.1.1.11"/>
    </reaction>
</comment>
<comment type="pathway">
    <text evidence="1">Aminoacyl-tRNA biosynthesis; selenocysteinyl-tRNA(Sec) biosynthesis; L-seryl-tRNA(Sec) from L-serine and tRNA(Sec): step 1/1.</text>
</comment>
<comment type="subunit">
    <text evidence="1">Homodimer. The tRNA molecule binds across the dimer.</text>
</comment>
<comment type="subcellular location">
    <subcellularLocation>
        <location evidence="1">Cytoplasm</location>
    </subcellularLocation>
</comment>
<comment type="domain">
    <text evidence="1">Consists of two distinct domains, a catalytic core and a N-terminal extension that is involved in tRNA binding.</text>
</comment>
<comment type="similarity">
    <text evidence="1">Belongs to the class-II aminoacyl-tRNA synthetase family. Type-1 seryl-tRNA synthetase subfamily.</text>
</comment>
<protein>
    <recommendedName>
        <fullName evidence="1">Serine--tRNA ligase</fullName>
        <ecNumber evidence="1">6.1.1.11</ecNumber>
    </recommendedName>
    <alternativeName>
        <fullName evidence="1">Seryl-tRNA synthetase</fullName>
        <shortName evidence="1">SerRS</shortName>
    </alternativeName>
    <alternativeName>
        <fullName evidence="1">Seryl-tRNA(Ser/Sec) synthetase</fullName>
    </alternativeName>
</protein>
<feature type="chain" id="PRO_1000019774" description="Serine--tRNA ligase">
    <location>
        <begin position="1"/>
        <end position="426"/>
    </location>
</feature>
<feature type="region of interest" description="Disordered" evidence="2">
    <location>
        <begin position="37"/>
        <end position="63"/>
    </location>
</feature>
<feature type="binding site" evidence="1">
    <location>
        <begin position="233"/>
        <end position="235"/>
    </location>
    <ligand>
        <name>L-serine</name>
        <dbReference type="ChEBI" id="CHEBI:33384"/>
    </ligand>
</feature>
<feature type="binding site" evidence="1">
    <location>
        <begin position="264"/>
        <end position="266"/>
    </location>
    <ligand>
        <name>ATP</name>
        <dbReference type="ChEBI" id="CHEBI:30616"/>
    </ligand>
</feature>
<feature type="binding site" evidence="1">
    <location>
        <position position="287"/>
    </location>
    <ligand>
        <name>L-serine</name>
        <dbReference type="ChEBI" id="CHEBI:33384"/>
    </ligand>
</feature>
<feature type="binding site" evidence="1">
    <location>
        <begin position="351"/>
        <end position="354"/>
    </location>
    <ligand>
        <name>ATP</name>
        <dbReference type="ChEBI" id="CHEBI:30616"/>
    </ligand>
</feature>
<feature type="binding site" evidence="1">
    <location>
        <position position="387"/>
    </location>
    <ligand>
        <name>L-serine</name>
        <dbReference type="ChEBI" id="CHEBI:33384"/>
    </ligand>
</feature>
<keyword id="KW-0030">Aminoacyl-tRNA synthetase</keyword>
<keyword id="KW-0067">ATP-binding</keyword>
<keyword id="KW-0963">Cytoplasm</keyword>
<keyword id="KW-0436">Ligase</keyword>
<keyword id="KW-0547">Nucleotide-binding</keyword>
<keyword id="KW-0648">Protein biosynthesis</keyword>
<organism>
    <name type="scientific">Pseudomonas entomophila (strain L48)</name>
    <dbReference type="NCBI Taxonomy" id="384676"/>
    <lineage>
        <taxon>Bacteria</taxon>
        <taxon>Pseudomonadati</taxon>
        <taxon>Pseudomonadota</taxon>
        <taxon>Gammaproteobacteria</taxon>
        <taxon>Pseudomonadales</taxon>
        <taxon>Pseudomonadaceae</taxon>
        <taxon>Pseudomonas</taxon>
    </lineage>
</organism>
<accession>Q1IBD0</accession>
<evidence type="ECO:0000255" key="1">
    <source>
        <dbReference type="HAMAP-Rule" id="MF_00176"/>
    </source>
</evidence>
<evidence type="ECO:0000256" key="2">
    <source>
        <dbReference type="SAM" id="MobiDB-lite"/>
    </source>
</evidence>
<proteinExistence type="inferred from homology"/>
<gene>
    <name evidence="1" type="primary">serS</name>
    <name type="ordered locus">PSEEN2216</name>
</gene>
<sequence length="426" mass="47123">MLDSKQLRTELQVVADRLATRGFSLDVARIESLEERRKSVQTRTEQLQAERNARSKSIGQAKAKGEDIAPLMADVERMANELAEGKTELDGIQAELDAILLTIPNLPDASVPVGASEEENVEVRRWGTPATFDFEIKDHVALGEISRGLDFEAAAKLSGARFAVLRGPIARLHRALAQFMINLHTGEHGYEEHYTPYLVQAPALQGTGQLPKFEEDLFKISREGEADFYLIPTAEVSLTNLVAGEIIDAKQLPIKLVAHTPCFRSEAGASGRDTRGMIRQHQFDKVEMVQVVEPSKSMEALEGLTANAERVLQLLELPYRVLALCTGDMGFGAVKTYDLEVWVPSQDKYREISSCSNCGDFQARRMQARWRNPETGKPELVHTLNGSGLAVGRTLVAVLENYQQADGSIRVPEVLKPYMGGVEVIR</sequence>
<dbReference type="EC" id="6.1.1.11" evidence="1"/>
<dbReference type="EMBL" id="CT573326">
    <property type="protein sequence ID" value="CAK15035.1"/>
    <property type="molecule type" value="Genomic_DNA"/>
</dbReference>
<dbReference type="RefSeq" id="WP_011533437.1">
    <property type="nucleotide sequence ID" value="NC_008027.1"/>
</dbReference>
<dbReference type="SMR" id="Q1IBD0"/>
<dbReference type="STRING" id="384676.PSEEN2216"/>
<dbReference type="GeneID" id="32805414"/>
<dbReference type="KEGG" id="pen:PSEEN2216"/>
<dbReference type="eggNOG" id="COG0172">
    <property type="taxonomic scope" value="Bacteria"/>
</dbReference>
<dbReference type="HOGENOM" id="CLU_023797_1_1_6"/>
<dbReference type="OrthoDB" id="9804647at2"/>
<dbReference type="UniPathway" id="UPA00906">
    <property type="reaction ID" value="UER00895"/>
</dbReference>
<dbReference type="Proteomes" id="UP000000658">
    <property type="component" value="Chromosome"/>
</dbReference>
<dbReference type="GO" id="GO:0005737">
    <property type="term" value="C:cytoplasm"/>
    <property type="evidence" value="ECO:0007669"/>
    <property type="project" value="UniProtKB-SubCell"/>
</dbReference>
<dbReference type="GO" id="GO:0005524">
    <property type="term" value="F:ATP binding"/>
    <property type="evidence" value="ECO:0007669"/>
    <property type="project" value="UniProtKB-UniRule"/>
</dbReference>
<dbReference type="GO" id="GO:0004828">
    <property type="term" value="F:serine-tRNA ligase activity"/>
    <property type="evidence" value="ECO:0007669"/>
    <property type="project" value="UniProtKB-UniRule"/>
</dbReference>
<dbReference type="GO" id="GO:0016260">
    <property type="term" value="P:selenocysteine biosynthetic process"/>
    <property type="evidence" value="ECO:0007669"/>
    <property type="project" value="UniProtKB-UniRule"/>
</dbReference>
<dbReference type="GO" id="GO:0006434">
    <property type="term" value="P:seryl-tRNA aminoacylation"/>
    <property type="evidence" value="ECO:0007669"/>
    <property type="project" value="UniProtKB-UniRule"/>
</dbReference>
<dbReference type="CDD" id="cd00770">
    <property type="entry name" value="SerRS_core"/>
    <property type="match status" value="1"/>
</dbReference>
<dbReference type="Gene3D" id="3.30.930.10">
    <property type="entry name" value="Bira Bifunctional Protein, Domain 2"/>
    <property type="match status" value="1"/>
</dbReference>
<dbReference type="Gene3D" id="1.10.287.40">
    <property type="entry name" value="Serine-tRNA synthetase, tRNA binding domain"/>
    <property type="match status" value="1"/>
</dbReference>
<dbReference type="HAMAP" id="MF_00176">
    <property type="entry name" value="Ser_tRNA_synth_type1"/>
    <property type="match status" value="1"/>
</dbReference>
<dbReference type="InterPro" id="IPR002314">
    <property type="entry name" value="aa-tRNA-synt_IIb"/>
</dbReference>
<dbReference type="InterPro" id="IPR006195">
    <property type="entry name" value="aa-tRNA-synth_II"/>
</dbReference>
<dbReference type="InterPro" id="IPR045864">
    <property type="entry name" value="aa-tRNA-synth_II/BPL/LPL"/>
</dbReference>
<dbReference type="InterPro" id="IPR002317">
    <property type="entry name" value="Ser-tRNA-ligase_type_1"/>
</dbReference>
<dbReference type="InterPro" id="IPR015866">
    <property type="entry name" value="Ser-tRNA-synth_1_N"/>
</dbReference>
<dbReference type="InterPro" id="IPR042103">
    <property type="entry name" value="SerRS_1_N_sf"/>
</dbReference>
<dbReference type="InterPro" id="IPR033729">
    <property type="entry name" value="SerRS_core"/>
</dbReference>
<dbReference type="InterPro" id="IPR010978">
    <property type="entry name" value="tRNA-bd_arm"/>
</dbReference>
<dbReference type="NCBIfam" id="TIGR00414">
    <property type="entry name" value="serS"/>
    <property type="match status" value="1"/>
</dbReference>
<dbReference type="PANTHER" id="PTHR43697:SF1">
    <property type="entry name" value="SERINE--TRNA LIGASE"/>
    <property type="match status" value="1"/>
</dbReference>
<dbReference type="PANTHER" id="PTHR43697">
    <property type="entry name" value="SERYL-TRNA SYNTHETASE"/>
    <property type="match status" value="1"/>
</dbReference>
<dbReference type="Pfam" id="PF02403">
    <property type="entry name" value="Seryl_tRNA_N"/>
    <property type="match status" value="1"/>
</dbReference>
<dbReference type="Pfam" id="PF00587">
    <property type="entry name" value="tRNA-synt_2b"/>
    <property type="match status" value="1"/>
</dbReference>
<dbReference type="PIRSF" id="PIRSF001529">
    <property type="entry name" value="Ser-tRNA-synth_IIa"/>
    <property type="match status" value="1"/>
</dbReference>
<dbReference type="PRINTS" id="PR00981">
    <property type="entry name" value="TRNASYNTHSER"/>
</dbReference>
<dbReference type="SUPFAM" id="SSF55681">
    <property type="entry name" value="Class II aaRS and biotin synthetases"/>
    <property type="match status" value="1"/>
</dbReference>
<dbReference type="SUPFAM" id="SSF46589">
    <property type="entry name" value="tRNA-binding arm"/>
    <property type="match status" value="1"/>
</dbReference>
<dbReference type="PROSITE" id="PS50862">
    <property type="entry name" value="AA_TRNA_LIGASE_II"/>
    <property type="match status" value="1"/>
</dbReference>
<name>SYS_PSEE4</name>